<feature type="chain" id="PRO_1000077976" description="Probable manganese-dependent inorganic pyrophosphatase">
    <location>
        <begin position="1"/>
        <end position="309"/>
    </location>
</feature>
<feature type="binding site" evidence="1">
    <location>
        <position position="9"/>
    </location>
    <ligand>
        <name>Mn(2+)</name>
        <dbReference type="ChEBI" id="CHEBI:29035"/>
        <label>1</label>
    </ligand>
</feature>
<feature type="binding site" evidence="1">
    <location>
        <position position="13"/>
    </location>
    <ligand>
        <name>Mn(2+)</name>
        <dbReference type="ChEBI" id="CHEBI:29035"/>
        <label>1</label>
    </ligand>
</feature>
<feature type="binding site" evidence="1">
    <location>
        <position position="15"/>
    </location>
    <ligand>
        <name>Mn(2+)</name>
        <dbReference type="ChEBI" id="CHEBI:29035"/>
        <label>2</label>
    </ligand>
</feature>
<feature type="binding site" evidence="1">
    <location>
        <position position="75"/>
    </location>
    <ligand>
        <name>Mn(2+)</name>
        <dbReference type="ChEBI" id="CHEBI:29035"/>
        <label>1</label>
    </ligand>
</feature>
<feature type="binding site" evidence="1">
    <location>
        <position position="75"/>
    </location>
    <ligand>
        <name>Mn(2+)</name>
        <dbReference type="ChEBI" id="CHEBI:29035"/>
        <label>2</label>
    </ligand>
</feature>
<feature type="binding site" evidence="1">
    <location>
        <position position="97"/>
    </location>
    <ligand>
        <name>Mn(2+)</name>
        <dbReference type="ChEBI" id="CHEBI:29035"/>
        <label>2</label>
    </ligand>
</feature>
<feature type="binding site" evidence="1">
    <location>
        <position position="149"/>
    </location>
    <ligand>
        <name>Mn(2+)</name>
        <dbReference type="ChEBI" id="CHEBI:29035"/>
        <label>2</label>
    </ligand>
</feature>
<comment type="catalytic activity">
    <reaction evidence="1">
        <text>diphosphate + H2O = 2 phosphate + H(+)</text>
        <dbReference type="Rhea" id="RHEA:24576"/>
        <dbReference type="ChEBI" id="CHEBI:15377"/>
        <dbReference type="ChEBI" id="CHEBI:15378"/>
        <dbReference type="ChEBI" id="CHEBI:33019"/>
        <dbReference type="ChEBI" id="CHEBI:43474"/>
        <dbReference type="EC" id="3.6.1.1"/>
    </reaction>
</comment>
<comment type="cofactor">
    <cofactor evidence="1">
        <name>Mn(2+)</name>
        <dbReference type="ChEBI" id="CHEBI:29035"/>
    </cofactor>
    <text evidence="1">Binds 2 manganese ions per subunit.</text>
</comment>
<comment type="subcellular location">
    <subcellularLocation>
        <location evidence="1">Cytoplasm</location>
    </subcellularLocation>
</comment>
<comment type="similarity">
    <text evidence="1">Belongs to the PPase class C family.</text>
</comment>
<evidence type="ECO:0000255" key="1">
    <source>
        <dbReference type="HAMAP-Rule" id="MF_00207"/>
    </source>
</evidence>
<organism>
    <name type="scientific">Staphylococcus aureus (strain JH1)</name>
    <dbReference type="NCBI Taxonomy" id="359787"/>
    <lineage>
        <taxon>Bacteria</taxon>
        <taxon>Bacillati</taxon>
        <taxon>Bacillota</taxon>
        <taxon>Bacilli</taxon>
        <taxon>Bacillales</taxon>
        <taxon>Staphylococcaceae</taxon>
        <taxon>Staphylococcus</taxon>
    </lineage>
</organism>
<reference key="1">
    <citation type="submission" date="2007-06" db="EMBL/GenBank/DDBJ databases">
        <title>Complete sequence of chromosome of Staphylococcus aureus subsp. aureus JH1.</title>
        <authorList>
            <consortium name="US DOE Joint Genome Institute"/>
            <person name="Copeland A."/>
            <person name="Lucas S."/>
            <person name="Lapidus A."/>
            <person name="Barry K."/>
            <person name="Detter J.C."/>
            <person name="Glavina del Rio T."/>
            <person name="Hammon N."/>
            <person name="Israni S."/>
            <person name="Dalin E."/>
            <person name="Tice H."/>
            <person name="Pitluck S."/>
            <person name="Chain P."/>
            <person name="Malfatti S."/>
            <person name="Shin M."/>
            <person name="Vergez L."/>
            <person name="Schmutz J."/>
            <person name="Larimer F."/>
            <person name="Land M."/>
            <person name="Hauser L."/>
            <person name="Kyrpides N."/>
            <person name="Ivanova N."/>
            <person name="Tomasz A."/>
            <person name="Richardson P."/>
        </authorList>
    </citation>
    <scope>NUCLEOTIDE SEQUENCE [LARGE SCALE GENOMIC DNA]</scope>
    <source>
        <strain>JH1</strain>
    </source>
</reference>
<protein>
    <recommendedName>
        <fullName evidence="1">Probable manganese-dependent inorganic pyrophosphatase</fullName>
        <ecNumber evidence="1">3.6.1.1</ecNumber>
    </recommendedName>
    <alternativeName>
        <fullName evidence="1">Pyrophosphate phospho-hydrolase</fullName>
        <shortName evidence="1">PPase</shortName>
    </alternativeName>
</protein>
<proteinExistence type="inferred from homology"/>
<dbReference type="EC" id="3.6.1.1" evidence="1"/>
<dbReference type="EMBL" id="CP000736">
    <property type="protein sequence ID" value="ABR52843.1"/>
    <property type="molecule type" value="Genomic_DNA"/>
</dbReference>
<dbReference type="SMR" id="A6U325"/>
<dbReference type="KEGG" id="sah:SaurJH1_2009"/>
<dbReference type="HOGENOM" id="CLU_025243_0_1_9"/>
<dbReference type="GO" id="GO:0005737">
    <property type="term" value="C:cytoplasm"/>
    <property type="evidence" value="ECO:0007669"/>
    <property type="project" value="UniProtKB-SubCell"/>
</dbReference>
<dbReference type="GO" id="GO:0004427">
    <property type="term" value="F:inorganic diphosphate phosphatase activity"/>
    <property type="evidence" value="ECO:0007669"/>
    <property type="project" value="UniProtKB-UniRule"/>
</dbReference>
<dbReference type="GO" id="GO:0030145">
    <property type="term" value="F:manganese ion binding"/>
    <property type="evidence" value="ECO:0007669"/>
    <property type="project" value="UniProtKB-UniRule"/>
</dbReference>
<dbReference type="FunFam" id="3.10.310.20:FF:000001">
    <property type="entry name" value="Probable manganese-dependent inorganic pyrophosphatase"/>
    <property type="match status" value="1"/>
</dbReference>
<dbReference type="FunFam" id="3.90.1640.10:FF:000001">
    <property type="entry name" value="Probable manganese-dependent inorganic pyrophosphatase"/>
    <property type="match status" value="1"/>
</dbReference>
<dbReference type="Gene3D" id="3.10.310.20">
    <property type="entry name" value="DHHA2 domain"/>
    <property type="match status" value="1"/>
</dbReference>
<dbReference type="Gene3D" id="3.90.1640.10">
    <property type="entry name" value="inorganic pyrophosphatase (n-terminal core)"/>
    <property type="match status" value="1"/>
</dbReference>
<dbReference type="HAMAP" id="MF_00207">
    <property type="entry name" value="PPase_C"/>
    <property type="match status" value="1"/>
</dbReference>
<dbReference type="InterPro" id="IPR001667">
    <property type="entry name" value="DDH_dom"/>
</dbReference>
<dbReference type="InterPro" id="IPR038763">
    <property type="entry name" value="DHH_sf"/>
</dbReference>
<dbReference type="InterPro" id="IPR004097">
    <property type="entry name" value="DHHA2"/>
</dbReference>
<dbReference type="InterPro" id="IPR038222">
    <property type="entry name" value="DHHA2_dom_sf"/>
</dbReference>
<dbReference type="InterPro" id="IPR022934">
    <property type="entry name" value="Mn-dep_inorganic_PyrPase"/>
</dbReference>
<dbReference type="NCBIfam" id="NF003877">
    <property type="entry name" value="PRK05427.1"/>
    <property type="match status" value="1"/>
</dbReference>
<dbReference type="PANTHER" id="PTHR12112">
    <property type="entry name" value="BNIP - RELATED"/>
    <property type="match status" value="1"/>
</dbReference>
<dbReference type="PANTHER" id="PTHR12112:SF22">
    <property type="entry name" value="MANGANESE-DEPENDENT INORGANIC PYROPHOSPHATASE-RELATED"/>
    <property type="match status" value="1"/>
</dbReference>
<dbReference type="Pfam" id="PF01368">
    <property type="entry name" value="DHH"/>
    <property type="match status" value="1"/>
</dbReference>
<dbReference type="Pfam" id="PF02833">
    <property type="entry name" value="DHHA2"/>
    <property type="match status" value="1"/>
</dbReference>
<dbReference type="SMART" id="SM01131">
    <property type="entry name" value="DHHA2"/>
    <property type="match status" value="1"/>
</dbReference>
<dbReference type="SUPFAM" id="SSF64182">
    <property type="entry name" value="DHH phosphoesterases"/>
    <property type="match status" value="1"/>
</dbReference>
<sequence>MAKTYIFGHKNPDTDAISSAIIMAEFEQLRGNSGAKAYRLGDVSAETQFALDTFNVPAPELLTDDLDGQDVILVDHNEFQQSSDTIASATIKHVIDHHRIANFETAGPLCYRAEPVGCTATILYKMFRERGFEIKPEIAGLMLSAIISDSLLFKSPTCTQQDVKAAEELKDIAKVDIQKYGLDMLKAGASTTDKSVEFLLNMDAKSFTMGDYVTRIAQVNAVDLDEVLNRKEDLEKEMLAVSAQEKYDLFVLVVTDIINSDSKILVVGAEKDKVGEAFNVQLEDDMAFLSGVVSRKKQIVPQITEALTK</sequence>
<gene>
    <name evidence="1" type="primary">ppaC</name>
    <name type="ordered locus">SaurJH1_2009</name>
</gene>
<keyword id="KW-0963">Cytoplasm</keyword>
<keyword id="KW-0378">Hydrolase</keyword>
<keyword id="KW-0464">Manganese</keyword>
<keyword id="KW-0479">Metal-binding</keyword>
<accession>A6U325</accession>
<name>PPAC_STAA2</name>